<name>P8_RDVA</name>
<protein>
    <recommendedName>
        <fullName>Outer capsid protein P8</fullName>
    </recommendedName>
    <alternativeName>
        <fullName>Structural protein P8</fullName>
    </alternativeName>
    <component>
        <recommendedName>
            <fullName>Outer capsid protein P8'</fullName>
        </recommendedName>
    </component>
    <component>
        <recommendedName>
            <fullName>Small peptide 1</fullName>
            <shortName>Sp1</shortName>
        </recommendedName>
    </component>
</protein>
<proteinExistence type="evidence at protein level"/>
<feature type="chain" id="PRO_0000040668" description="Outer capsid protein P8">
    <location>
        <begin position="1"/>
        <end position="421"/>
    </location>
</feature>
<feature type="chain" id="PRO_0000040669" description="Outer capsid protein P8'">
    <location>
        <begin position="1"/>
        <end position="362"/>
    </location>
</feature>
<feature type="chain" id="PRO_0000040670" description="Small peptide 1">
    <location>
        <begin position="363"/>
        <end position="421"/>
    </location>
</feature>
<accession>Q85449</accession>
<organismHost>
    <name type="scientific">Alopecurus aequalis</name>
    <dbReference type="NCBI Taxonomy" id="114194"/>
</organismHost>
<organismHost>
    <name type="scientific">Echinochloa crus-galli</name>
    <name type="common">Barnyard grass</name>
    <name type="synonym">Panicum crus-galli</name>
    <dbReference type="NCBI Taxonomy" id="90397"/>
</organismHost>
<organismHost>
    <name type="scientific">Nephotettix cincticeps</name>
    <name type="common">Green rice leafhopper</name>
    <name type="synonym">Selenocephalus cincticeps</name>
    <dbReference type="NCBI Taxonomy" id="94400"/>
</organismHost>
<organismHost>
    <name type="scientific">Oryza sativa</name>
    <name type="common">Rice</name>
    <dbReference type="NCBI Taxonomy" id="4530"/>
</organismHost>
<organismHost>
    <name type="scientific">Paspalum</name>
    <dbReference type="NCBI Taxonomy" id="147271"/>
</organismHost>
<evidence type="ECO:0000250" key="1"/>
<evidence type="ECO:0000305" key="2"/>
<sequence>MSRQMWLDTSALLEAISEYVVRCNGDTFSGLTTGDFNALSNMFTQLSVSSAGYVSDPRVPLQTMSNMFVSFITSTDRCGYMLRKTWFNSDTKPTVSDDFITTYIRPRLQVPMSDTVRQLNNLSLQPSAKPKLYERQNAIMKGLDIPYSEPIEPCKLFRSVAGQTGNIPMMGILATPPAAQQQPFFVAERRRILFGIRSNAAIPAGAYQFVVPAWASVLSVTGAYVYFTNSFFGTTIAGVTATATAADAATTFTVPTDANNLPVQTDSRLSFSLGGGNINLELGVAKTGFCVAIEGEFTILANRSQAYYTLNSITQTPTSIDDFDVSDFLTTFLSQLRACGQYEIFSDAMDQLTNSLITNYMDPPALPAGLAFTSPWFRFSERARTILALQNVDLNIRKLIVRHLWVITSLIAVFGRYYRPN</sequence>
<reference key="1">
    <citation type="journal article" date="1993" name="Arch. Virol.">
        <title>In vitro translation of rice dwarf phytoreovirus genome segments S4 to S10.</title>
        <authorList>
            <person name="Suzuki N."/>
        </authorList>
    </citation>
    <scope>NUCLEOTIDE SEQUENCE [MRNA]</scope>
</reference>
<keyword id="KW-0167">Capsid protein</keyword>
<keyword id="KW-1035">Host cytoplasm</keyword>
<keyword id="KW-0945">Host-virus interaction</keyword>
<keyword id="KW-1152">Outer capsid protein</keyword>
<keyword id="KW-0946">Virion</keyword>
<organism>
    <name type="scientific">Rice dwarf virus (isolate Akita)</name>
    <name type="common">RDV</name>
    <dbReference type="NCBI Taxonomy" id="142803"/>
    <lineage>
        <taxon>Viruses</taxon>
        <taxon>Riboviria</taxon>
        <taxon>Orthornavirae</taxon>
        <taxon>Duplornaviricota</taxon>
        <taxon>Resentoviricetes</taxon>
        <taxon>Reovirales</taxon>
        <taxon>Sedoreoviridae</taxon>
        <taxon>Phytoreovirus</taxon>
        <taxon>Rice dwarf virus</taxon>
    </lineage>
</organism>
<comment type="function">
    <text>Capsid protein which self-assembles to form the outer icosahedral capsid with a T=13 symmetry, about 70 nm in diameter and consisting of 780 molecules capsid proteins.</text>
</comment>
<comment type="subunit">
    <text evidence="1">Homotrimer (By similarity). Homomultimer (By similarity). Interacts with host peroxisomal glycolate oxidase (GOX). This interaction mediates its relocation to virus factories peripheral to host peroxisomes (By similarity).</text>
</comment>
<comment type="interaction">
    <interactant intactId="EBI-7184126">
        <id>Q85449</id>
    </interactant>
    <interactant intactId="EBI-7184099">
        <id>O22544</id>
        <label>GOX</label>
    </interactant>
    <organismsDiffer>true</organismsDiffer>
    <experiments>4</experiments>
</comment>
<comment type="subcellular location">
    <molecule>Outer capsid protein P8</molecule>
    <subcellularLocation>
        <location evidence="2">Virion</location>
    </subcellularLocation>
    <subcellularLocation>
        <location evidence="1">Host cytoplasm</location>
    </subcellularLocation>
    <text evidence="1">Found in the peripheral regions of spherical cytoplasmic structures, called virus factories, that appear early after infection and are the site of viral replication and packaging.</text>
</comment>
<comment type="similarity">
    <text evidence="2">Belongs to the phytoreovirus outer capsid protein P8 family.</text>
</comment>
<dbReference type="EMBL" id="D10219">
    <property type="protein sequence ID" value="BAA01071.1"/>
    <property type="molecule type" value="mRNA"/>
</dbReference>
<dbReference type="SMR" id="Q85449"/>
<dbReference type="IntAct" id="Q85449">
    <property type="interactions" value="1"/>
</dbReference>
<dbReference type="MINT" id="Q85449"/>
<dbReference type="GO" id="GO:0030430">
    <property type="term" value="C:host cell cytoplasm"/>
    <property type="evidence" value="ECO:0000250"/>
    <property type="project" value="UniProtKB"/>
</dbReference>
<dbReference type="GO" id="GO:0044161">
    <property type="term" value="C:host cell cytoplasmic vesicle"/>
    <property type="evidence" value="ECO:0000250"/>
    <property type="project" value="UniProtKB"/>
</dbReference>
<dbReference type="GO" id="GO:0019031">
    <property type="term" value="C:viral envelope"/>
    <property type="evidence" value="ECO:0007669"/>
    <property type="project" value="InterPro"/>
</dbReference>
<dbReference type="GO" id="GO:0039624">
    <property type="term" value="C:viral outer capsid"/>
    <property type="evidence" value="ECO:0007669"/>
    <property type="project" value="UniProtKB-KW"/>
</dbReference>
<dbReference type="GO" id="GO:0046789">
    <property type="term" value="F:host cell surface receptor binding"/>
    <property type="evidence" value="ECO:0007669"/>
    <property type="project" value="InterPro"/>
</dbReference>
<dbReference type="GO" id="GO:0005198">
    <property type="term" value="F:structural molecule activity"/>
    <property type="evidence" value="ECO:0007669"/>
    <property type="project" value="InterPro"/>
</dbReference>
<dbReference type="GO" id="GO:0019064">
    <property type="term" value="P:fusion of virus membrane with host plasma membrane"/>
    <property type="evidence" value="ECO:0007669"/>
    <property type="project" value="InterPro"/>
</dbReference>
<dbReference type="GO" id="GO:0046718">
    <property type="term" value="P:symbiont entry into host cell"/>
    <property type="evidence" value="ECO:0000250"/>
    <property type="project" value="UniProtKB"/>
</dbReference>
<dbReference type="FunFam" id="2.60.120.170:FF:000002">
    <property type="entry name" value="Outer capsid protein P8"/>
    <property type="match status" value="1"/>
</dbReference>
<dbReference type="Gene3D" id="2.60.120.170">
    <property type="match status" value="1"/>
</dbReference>
<dbReference type="InterPro" id="IPR008980">
    <property type="entry name" value="Capsid_hemagglutn"/>
</dbReference>
<dbReference type="InterPro" id="IPR009807">
    <property type="entry name" value="Phytoreo_P8"/>
</dbReference>
<dbReference type="InterPro" id="IPR008935">
    <property type="entry name" value="Virus_capsid_a-hlx_vir"/>
</dbReference>
<dbReference type="Pfam" id="PF07124">
    <property type="entry name" value="Phytoreo_P8"/>
    <property type="match status" value="1"/>
</dbReference>
<dbReference type="SUPFAM" id="SSF48345">
    <property type="entry name" value="A virus capsid protein alpha-helical domain"/>
    <property type="match status" value="1"/>
</dbReference>
<dbReference type="SUPFAM" id="SSF49818">
    <property type="entry name" value="Viral protein domain"/>
    <property type="match status" value="1"/>
</dbReference>